<organism>
    <name type="scientific">Latilactobacillus sakei subsp. sakei (strain 23K)</name>
    <name type="common">Lactobacillus sakei subsp. sakei</name>
    <dbReference type="NCBI Taxonomy" id="314315"/>
    <lineage>
        <taxon>Bacteria</taxon>
        <taxon>Bacillati</taxon>
        <taxon>Bacillota</taxon>
        <taxon>Bacilli</taxon>
        <taxon>Lactobacillales</taxon>
        <taxon>Lactobacillaceae</taxon>
        <taxon>Latilactobacillus</taxon>
    </lineage>
</organism>
<gene>
    <name evidence="1" type="primary">hprK</name>
    <name type="ordered locus">LCA_0516</name>
</gene>
<protein>
    <recommendedName>
        <fullName evidence="1">HPr kinase/phosphorylase</fullName>
        <shortName evidence="1">HPrK/P</shortName>
        <ecNumber evidence="1">2.7.11.-</ecNumber>
        <ecNumber evidence="1">2.7.4.-</ecNumber>
    </recommendedName>
    <alternativeName>
        <fullName evidence="1">HPr(Ser) kinase/phosphorylase</fullName>
    </alternativeName>
</protein>
<proteinExistence type="inferred from homology"/>
<sequence length="313" mass="34854">MADSVSMERLVTDLKLQVYSGEAHLKEKIVTLSDISRPGLELTGYFNYYPYERIQLFGMTEVSFTQNMTAEERLMIMRRMASENTPCFLISRSLEPPKEMLQAAEESGIPVLGSNLSTTRLSSLVTDYLDGQLAERRSMHGVLVDIYGLGVLITGDSGVGKSETALELVKRGHRLIADDRVDVYQQDERTVVGEAPMILRHLLEIRGIGIIDVMNLFGAGAVRADTSISLIVHLQNWSQDKKYDRLGSDTEEQMIFDVPVPKITVPVKVGRNLAIIIEVAAMNFRAKSMGYDATKTFEANLGKLIESNSDDEN</sequence>
<reference key="1">
    <citation type="journal article" date="2005" name="Nat. Biotechnol.">
        <title>The complete genome sequence of the meat-borne lactic acid bacterium Lactobacillus sakei 23K.</title>
        <authorList>
            <person name="Chaillou S."/>
            <person name="Champomier-Verges M.-C."/>
            <person name="Cornet M."/>
            <person name="Crutz-Le Coq A.-M."/>
            <person name="Dudez A.-M."/>
            <person name="Martin V."/>
            <person name="Beaufils S."/>
            <person name="Darbon-Rongere E."/>
            <person name="Bossy R."/>
            <person name="Loux V."/>
            <person name="Zagorec M."/>
        </authorList>
    </citation>
    <scope>NUCLEOTIDE SEQUENCE [LARGE SCALE GENOMIC DNA]</scope>
    <source>
        <strain>23K</strain>
    </source>
</reference>
<keyword id="KW-0067">ATP-binding</keyword>
<keyword id="KW-0119">Carbohydrate metabolism</keyword>
<keyword id="KW-0418">Kinase</keyword>
<keyword id="KW-0460">Magnesium</keyword>
<keyword id="KW-0479">Metal-binding</keyword>
<keyword id="KW-0511">Multifunctional enzyme</keyword>
<keyword id="KW-0547">Nucleotide-binding</keyword>
<keyword id="KW-1185">Reference proteome</keyword>
<keyword id="KW-0723">Serine/threonine-protein kinase</keyword>
<keyword id="KW-0808">Transferase</keyword>
<feature type="chain" id="PRO_1000067156" description="HPr kinase/phosphorylase">
    <location>
        <begin position="1"/>
        <end position="313"/>
    </location>
</feature>
<feature type="region of interest" description="Important for the catalytic mechanism of both phosphorylation and dephosphorylation" evidence="1">
    <location>
        <begin position="203"/>
        <end position="212"/>
    </location>
</feature>
<feature type="region of interest" description="Important for the catalytic mechanism of dephosphorylation" evidence="1">
    <location>
        <begin position="266"/>
        <end position="271"/>
    </location>
</feature>
<feature type="active site" evidence="1">
    <location>
        <position position="140"/>
    </location>
</feature>
<feature type="active site" evidence="1">
    <location>
        <position position="161"/>
    </location>
</feature>
<feature type="active site" description="Proton acceptor; for phosphorylation activity. Proton donor; for dephosphorylation activity" evidence="1">
    <location>
        <position position="179"/>
    </location>
</feature>
<feature type="active site" evidence="1">
    <location>
        <position position="245"/>
    </location>
</feature>
<feature type="binding site" evidence="1">
    <location>
        <begin position="155"/>
        <end position="162"/>
    </location>
    <ligand>
        <name>ATP</name>
        <dbReference type="ChEBI" id="CHEBI:30616"/>
    </ligand>
</feature>
<feature type="binding site" evidence="1">
    <location>
        <position position="162"/>
    </location>
    <ligand>
        <name>Mg(2+)</name>
        <dbReference type="ChEBI" id="CHEBI:18420"/>
    </ligand>
</feature>
<feature type="binding site" evidence="1">
    <location>
        <position position="204"/>
    </location>
    <ligand>
        <name>Mg(2+)</name>
        <dbReference type="ChEBI" id="CHEBI:18420"/>
    </ligand>
</feature>
<name>HPRK_LATSS</name>
<evidence type="ECO:0000255" key="1">
    <source>
        <dbReference type="HAMAP-Rule" id="MF_01249"/>
    </source>
</evidence>
<comment type="function">
    <text evidence="1">Catalyzes the ATP- as well as the pyrophosphate-dependent phosphorylation of a specific serine residue in HPr, a phosphocarrier protein of the phosphoenolpyruvate-dependent sugar phosphotransferase system (PTS). HprK/P also catalyzes the pyrophosphate-producing, inorganic phosphate-dependent dephosphorylation (phosphorolysis) of seryl-phosphorylated HPr (P-Ser-HPr). The two antagonistic activities of HprK/P are regulated by several intracellular metabolites, which change their concentration in response to the absence or presence of rapidly metabolisable carbon sources (glucose, fructose, etc.) in the growth medium. Therefore, by controlling the phosphorylation state of HPr, HPrK/P is a sensor enzyme that plays a major role in the regulation of carbon metabolism and sugar transport: it mediates carbon catabolite repression (CCR), and regulates PTS-catalyzed carbohydrate uptake and inducer exclusion.</text>
</comment>
<comment type="catalytic activity">
    <reaction evidence="1">
        <text>[HPr protein]-L-serine + ATP = [HPr protein]-O-phospho-L-serine + ADP + H(+)</text>
        <dbReference type="Rhea" id="RHEA:46600"/>
        <dbReference type="Rhea" id="RHEA-COMP:11602"/>
        <dbReference type="Rhea" id="RHEA-COMP:11603"/>
        <dbReference type="ChEBI" id="CHEBI:15378"/>
        <dbReference type="ChEBI" id="CHEBI:29999"/>
        <dbReference type="ChEBI" id="CHEBI:30616"/>
        <dbReference type="ChEBI" id="CHEBI:83421"/>
        <dbReference type="ChEBI" id="CHEBI:456216"/>
    </reaction>
</comment>
<comment type="catalytic activity">
    <reaction evidence="1">
        <text>[HPr protein]-O-phospho-L-serine + phosphate + H(+) = [HPr protein]-L-serine + diphosphate</text>
        <dbReference type="Rhea" id="RHEA:46604"/>
        <dbReference type="Rhea" id="RHEA-COMP:11602"/>
        <dbReference type="Rhea" id="RHEA-COMP:11603"/>
        <dbReference type="ChEBI" id="CHEBI:15378"/>
        <dbReference type="ChEBI" id="CHEBI:29999"/>
        <dbReference type="ChEBI" id="CHEBI:33019"/>
        <dbReference type="ChEBI" id="CHEBI:43474"/>
        <dbReference type="ChEBI" id="CHEBI:83421"/>
    </reaction>
</comment>
<comment type="cofactor">
    <cofactor evidence="1">
        <name>Mg(2+)</name>
        <dbReference type="ChEBI" id="CHEBI:18420"/>
    </cofactor>
</comment>
<comment type="subunit">
    <text evidence="1">Homohexamer.</text>
</comment>
<comment type="domain">
    <text evidence="1">The Walker A ATP-binding motif also binds Pi and PPi.</text>
</comment>
<comment type="miscellaneous">
    <text evidence="1">Both phosphorylation and phosphorolysis are carried out by the same active site and suggest a common mechanism for both reactions.</text>
</comment>
<comment type="similarity">
    <text evidence="1">Belongs to the HPrK/P family.</text>
</comment>
<accession>Q38YB1</accession>
<dbReference type="EC" id="2.7.11.-" evidence="1"/>
<dbReference type="EC" id="2.7.4.-" evidence="1"/>
<dbReference type="EMBL" id="CR936503">
    <property type="protein sequence ID" value="CAI54816.1"/>
    <property type="molecule type" value="Genomic_DNA"/>
</dbReference>
<dbReference type="RefSeq" id="WP_011374224.1">
    <property type="nucleotide sequence ID" value="NC_007576.1"/>
</dbReference>
<dbReference type="SMR" id="Q38YB1"/>
<dbReference type="STRING" id="314315.LCA_0516"/>
<dbReference type="KEGG" id="lsa:LCA_0516"/>
<dbReference type="eggNOG" id="COG1493">
    <property type="taxonomic scope" value="Bacteria"/>
</dbReference>
<dbReference type="HOGENOM" id="CLU_052030_0_1_9"/>
<dbReference type="OrthoDB" id="9778803at2"/>
<dbReference type="Proteomes" id="UP000002707">
    <property type="component" value="Chromosome"/>
</dbReference>
<dbReference type="GO" id="GO:0005524">
    <property type="term" value="F:ATP binding"/>
    <property type="evidence" value="ECO:0007669"/>
    <property type="project" value="UniProtKB-UniRule"/>
</dbReference>
<dbReference type="GO" id="GO:0000287">
    <property type="term" value="F:magnesium ion binding"/>
    <property type="evidence" value="ECO:0007669"/>
    <property type="project" value="UniProtKB-UniRule"/>
</dbReference>
<dbReference type="GO" id="GO:0000155">
    <property type="term" value="F:phosphorelay sensor kinase activity"/>
    <property type="evidence" value="ECO:0007669"/>
    <property type="project" value="InterPro"/>
</dbReference>
<dbReference type="GO" id="GO:0004674">
    <property type="term" value="F:protein serine/threonine kinase activity"/>
    <property type="evidence" value="ECO:0007669"/>
    <property type="project" value="UniProtKB-KW"/>
</dbReference>
<dbReference type="GO" id="GO:0004712">
    <property type="term" value="F:protein serine/threonine/tyrosine kinase activity"/>
    <property type="evidence" value="ECO:0007669"/>
    <property type="project" value="UniProtKB-UniRule"/>
</dbReference>
<dbReference type="GO" id="GO:0006109">
    <property type="term" value="P:regulation of carbohydrate metabolic process"/>
    <property type="evidence" value="ECO:0007669"/>
    <property type="project" value="UniProtKB-UniRule"/>
</dbReference>
<dbReference type="CDD" id="cd01918">
    <property type="entry name" value="HprK_C"/>
    <property type="match status" value="1"/>
</dbReference>
<dbReference type="FunFam" id="3.40.50.300:FF:000174">
    <property type="entry name" value="HPr kinase/phosphorylase"/>
    <property type="match status" value="1"/>
</dbReference>
<dbReference type="Gene3D" id="3.40.1390.20">
    <property type="entry name" value="HprK N-terminal domain-like"/>
    <property type="match status" value="1"/>
</dbReference>
<dbReference type="Gene3D" id="3.40.50.300">
    <property type="entry name" value="P-loop containing nucleotide triphosphate hydrolases"/>
    <property type="match status" value="1"/>
</dbReference>
<dbReference type="HAMAP" id="MF_01249">
    <property type="entry name" value="HPr_kinase"/>
    <property type="match status" value="1"/>
</dbReference>
<dbReference type="InterPro" id="IPR003755">
    <property type="entry name" value="HPr(Ser)_kin/Pase"/>
</dbReference>
<dbReference type="InterPro" id="IPR011104">
    <property type="entry name" value="Hpr_kin/Pase_C"/>
</dbReference>
<dbReference type="InterPro" id="IPR011126">
    <property type="entry name" value="Hpr_kin/Pase_Hpr_N"/>
</dbReference>
<dbReference type="InterPro" id="IPR027417">
    <property type="entry name" value="P-loop_NTPase"/>
</dbReference>
<dbReference type="InterPro" id="IPR028979">
    <property type="entry name" value="Ser_kin/Pase_Hpr-like_N_sf"/>
</dbReference>
<dbReference type="NCBIfam" id="TIGR00679">
    <property type="entry name" value="hpr-ser"/>
    <property type="match status" value="1"/>
</dbReference>
<dbReference type="PANTHER" id="PTHR30305:SF1">
    <property type="entry name" value="HPR KINASE_PHOSPHORYLASE"/>
    <property type="match status" value="1"/>
</dbReference>
<dbReference type="PANTHER" id="PTHR30305">
    <property type="entry name" value="PROTEIN YJDM-RELATED"/>
    <property type="match status" value="1"/>
</dbReference>
<dbReference type="Pfam" id="PF07475">
    <property type="entry name" value="Hpr_kinase_C"/>
    <property type="match status" value="1"/>
</dbReference>
<dbReference type="Pfam" id="PF02603">
    <property type="entry name" value="Hpr_kinase_N"/>
    <property type="match status" value="1"/>
</dbReference>
<dbReference type="SUPFAM" id="SSF75138">
    <property type="entry name" value="HprK N-terminal domain-like"/>
    <property type="match status" value="1"/>
</dbReference>
<dbReference type="SUPFAM" id="SSF53795">
    <property type="entry name" value="PEP carboxykinase-like"/>
    <property type="match status" value="1"/>
</dbReference>